<name>CGKA_PSEVC</name>
<evidence type="ECO:0000255" key="1"/>
<evidence type="ECO:0000255" key="2">
    <source>
        <dbReference type="PROSITE-ProRule" id="PRU01098"/>
    </source>
</evidence>
<evidence type="ECO:0000269" key="3">
    <source>
    </source>
</evidence>
<evidence type="ECO:0000305" key="4"/>
<evidence type="ECO:0007829" key="5">
    <source>
        <dbReference type="PDB" id="1DYP"/>
    </source>
</evidence>
<accession>P43478</accession>
<dbReference type="EC" id="3.2.1.83"/>
<dbReference type="EMBL" id="X71620">
    <property type="protein sequence ID" value="CAA50624.1"/>
    <property type="molecule type" value="Genomic_DNA"/>
</dbReference>
<dbReference type="PIR" id="I39507">
    <property type="entry name" value="I39507"/>
</dbReference>
<dbReference type="PDB" id="1DYP">
    <property type="method" value="X-ray"/>
    <property type="resolution" value="1.54 A"/>
    <property type="chains" value="A=27-297"/>
</dbReference>
<dbReference type="PDB" id="5OCQ">
    <property type="method" value="X-ray"/>
    <property type="resolution" value="1.70 A"/>
    <property type="chains" value="A/B=26-301"/>
</dbReference>
<dbReference type="PDBsum" id="1DYP"/>
<dbReference type="PDBsum" id="5OCQ"/>
<dbReference type="SMR" id="P43478"/>
<dbReference type="CAZy" id="GH16">
    <property type="family name" value="Glycoside Hydrolase Family 16"/>
</dbReference>
<dbReference type="KEGG" id="ag:CAA50624"/>
<dbReference type="BioCyc" id="MetaCyc:MONOMER-16652"/>
<dbReference type="BRENDA" id="3.2.1.83">
    <property type="organism ID" value="273"/>
</dbReference>
<dbReference type="EvolutionaryTrace" id="P43478"/>
<dbReference type="GO" id="GO:0042597">
    <property type="term" value="C:periplasmic space"/>
    <property type="evidence" value="ECO:0007669"/>
    <property type="project" value="UniProtKB-SubCell"/>
</dbReference>
<dbReference type="GO" id="GO:0033918">
    <property type="term" value="F:kappa-carrageenase activity"/>
    <property type="evidence" value="ECO:0007669"/>
    <property type="project" value="UniProtKB-EC"/>
</dbReference>
<dbReference type="GO" id="GO:0005975">
    <property type="term" value="P:carbohydrate metabolic process"/>
    <property type="evidence" value="ECO:0007669"/>
    <property type="project" value="InterPro"/>
</dbReference>
<dbReference type="CDD" id="cd02177">
    <property type="entry name" value="GH16_kappa_carrageenase"/>
    <property type="match status" value="1"/>
</dbReference>
<dbReference type="FunFam" id="2.60.120.200:FF:000316">
    <property type="entry name" value="Beta-porphyranase A"/>
    <property type="match status" value="1"/>
</dbReference>
<dbReference type="Gene3D" id="2.60.120.200">
    <property type="match status" value="1"/>
</dbReference>
<dbReference type="Gene3D" id="2.60.40.1080">
    <property type="match status" value="1"/>
</dbReference>
<dbReference type="InterPro" id="IPR003343">
    <property type="entry name" value="Big_2"/>
</dbReference>
<dbReference type="InterPro" id="IPR013320">
    <property type="entry name" value="ConA-like_dom_sf"/>
</dbReference>
<dbReference type="InterPro" id="IPR000757">
    <property type="entry name" value="GH16"/>
</dbReference>
<dbReference type="InterPro" id="IPR008263">
    <property type="entry name" value="GH16_AS"/>
</dbReference>
<dbReference type="InterPro" id="IPR050546">
    <property type="entry name" value="Glycosyl_Hydrlase_16"/>
</dbReference>
<dbReference type="InterPro" id="IPR008964">
    <property type="entry name" value="Invasin/intimin_cell_adhesion"/>
</dbReference>
<dbReference type="PANTHER" id="PTHR10963:SF55">
    <property type="entry name" value="GLYCOSIDE HYDROLASE FAMILY 16 PROTEIN"/>
    <property type="match status" value="1"/>
</dbReference>
<dbReference type="PANTHER" id="PTHR10963">
    <property type="entry name" value="GLYCOSYL HYDROLASE-RELATED"/>
    <property type="match status" value="1"/>
</dbReference>
<dbReference type="Pfam" id="PF02368">
    <property type="entry name" value="Big_2"/>
    <property type="match status" value="1"/>
</dbReference>
<dbReference type="Pfam" id="PF00722">
    <property type="entry name" value="Glyco_hydro_16"/>
    <property type="match status" value="1"/>
</dbReference>
<dbReference type="SMART" id="SM00635">
    <property type="entry name" value="BID_2"/>
    <property type="match status" value="1"/>
</dbReference>
<dbReference type="SUPFAM" id="SSF49899">
    <property type="entry name" value="Concanavalin A-like lectins/glucanases"/>
    <property type="match status" value="1"/>
</dbReference>
<dbReference type="SUPFAM" id="SSF49373">
    <property type="entry name" value="Invasin/intimin cell-adhesion fragments"/>
    <property type="match status" value="1"/>
</dbReference>
<dbReference type="PROSITE" id="PS01034">
    <property type="entry name" value="GH16_1"/>
    <property type="match status" value="1"/>
</dbReference>
<dbReference type="PROSITE" id="PS51762">
    <property type="entry name" value="GH16_2"/>
    <property type="match status" value="1"/>
</dbReference>
<proteinExistence type="evidence at protein level"/>
<protein>
    <recommendedName>
        <fullName>Kappa-carrageenase</fullName>
        <ecNumber>3.2.1.83</ecNumber>
    </recommendedName>
</protein>
<organism>
    <name type="scientific">Pseudoalteromonas carrageenovora</name>
    <name type="common">Alteromonas carrageenovora</name>
    <dbReference type="NCBI Taxonomy" id="227"/>
    <lineage>
        <taxon>Bacteria</taxon>
        <taxon>Pseudomonadati</taxon>
        <taxon>Pseudomonadota</taxon>
        <taxon>Gammaproteobacteria</taxon>
        <taxon>Alteromonadales</taxon>
        <taxon>Pseudoalteromonadaceae</taxon>
        <taxon>Pseudoalteromonas</taxon>
    </lineage>
</organism>
<gene>
    <name type="primary">cgkA</name>
</gene>
<sequence length="397" mass="44224">MKPISIVAFPIPAISMLLLSAVSQAASMQPPIAKPGETWILQAKRSDEFNVKDATKWNFQTENYGVWSWKNENATVSNGKLKLTTKRESHQRTFWDGCNQQQVANYPLYYTSGVAKSRATGNYGYYEARIKGASTFPGVSPAFWMYSTIDRSLTKEGDVQYSEIDVVELTQKSAVRESDHDLHNIVVKNGKPTWMRPGSFPQTNHNGYHLPFDPRNDFHTYGVNVTKDKITWYVDGEIVGEKDNLYWHRQMNLTLSQGLRAPHTQWKCNQFYPSANKSAEGFPTSMEVDYVRTWVKVGNNNSAPGEGQSCPNTFVAVNSVQLSAAKQTLRKGQSTTLESTVLPNCATNKKVIYSSSNKNVATVNSAGVVKAKNKGTATITVKTKNKGKIDKLTIAVN</sequence>
<reference key="1">
    <citation type="journal article" date="1994" name="Gene">
        <title>The gene encoding the kappa-carrageenase of Alteromonas carrageenovora is related to beta-1,3-1,4-glucanases.</title>
        <authorList>
            <person name="Barbeyron T."/>
            <person name="Henrissat B."/>
            <person name="Kloareg B."/>
        </authorList>
    </citation>
    <scope>NUCLEOTIDE SEQUENCE [GENOMIC DNA]</scope>
    <scope>PROTEIN SEQUENCE OF 26-30 AND 33-37</scope>
    <source>
        <strain>ATCC 43555 / DSM 6820 / JCM 8851 / IAM 12662 / NBRC 12985 / NCIMB 302</strain>
    </source>
</reference>
<reference key="2">
    <citation type="journal article" date="2001" name="Structure">
        <title>The kappa-carrageenase of P. carrageenovora features a tunnel-shaped active site: a novel insight in the evolution of Clan-B glycoside hydrolases.</title>
        <authorList>
            <person name="Michel G."/>
            <person name="Chantalat L."/>
            <person name="Duee E."/>
            <person name="Barbeyron T."/>
            <person name="Henrissat B."/>
            <person name="Kloareg B."/>
            <person name="Dideberg O."/>
        </authorList>
    </citation>
    <scope>X-RAY CRYSTALLOGRAPHY (1.54 ANGSTROMS) OF 27-297</scope>
</reference>
<feature type="signal peptide" evidence="3">
    <location>
        <begin position="1"/>
        <end position="25"/>
    </location>
</feature>
<feature type="chain" id="PRO_0000011798" description="Kappa-carrageenase">
    <location>
        <begin position="26"/>
        <end position="397"/>
    </location>
</feature>
<feature type="domain" description="GH16" evidence="2">
    <location>
        <begin position="26"/>
        <end position="299"/>
    </location>
</feature>
<feature type="domain" description="BIG2" evidence="1">
    <location>
        <begin position="316"/>
        <end position="387"/>
    </location>
</feature>
<feature type="active site" description="Nucleophile">
    <location>
        <position position="163"/>
    </location>
</feature>
<feature type="active site">
    <location>
        <position position="165"/>
    </location>
</feature>
<feature type="active site" description="Proton donor">
    <location>
        <position position="168"/>
    </location>
</feature>
<feature type="site" description="Important for substrate recognition">
    <location>
        <position position="260"/>
    </location>
</feature>
<feature type="disulfide bond">
    <location>
        <begin position="98"/>
        <end position="268"/>
    </location>
</feature>
<feature type="strand" evidence="5">
    <location>
        <begin position="39"/>
        <end position="41"/>
    </location>
</feature>
<feature type="helix" evidence="5">
    <location>
        <begin position="43"/>
        <end position="45"/>
    </location>
</feature>
<feature type="turn" evidence="5">
    <location>
        <begin position="54"/>
        <end position="56"/>
    </location>
</feature>
<feature type="strand" evidence="5">
    <location>
        <begin position="57"/>
        <end position="60"/>
    </location>
</feature>
<feature type="strand" evidence="5">
    <location>
        <begin position="67"/>
        <end position="69"/>
    </location>
</feature>
<feature type="helix" evidence="5">
    <location>
        <begin position="71"/>
        <end position="73"/>
    </location>
</feature>
<feature type="strand" evidence="5">
    <location>
        <begin position="74"/>
        <end position="77"/>
    </location>
</feature>
<feature type="strand" evidence="5">
    <location>
        <begin position="80"/>
        <end position="96"/>
    </location>
</feature>
<feature type="helix" evidence="5">
    <location>
        <begin position="97"/>
        <end position="99"/>
    </location>
</feature>
<feature type="strand" evidence="5">
    <location>
        <begin position="101"/>
        <end position="112"/>
    </location>
</feature>
<feature type="strand" evidence="5">
    <location>
        <begin position="114"/>
        <end position="121"/>
    </location>
</feature>
<feature type="strand" evidence="5">
    <location>
        <begin position="123"/>
        <end position="131"/>
    </location>
</feature>
<feature type="strand" evidence="5">
    <location>
        <begin position="137"/>
        <end position="146"/>
    </location>
</feature>
<feature type="strand" evidence="5">
    <location>
        <begin position="159"/>
        <end position="168"/>
    </location>
</feature>
<feature type="strand" evidence="5">
    <location>
        <begin position="172"/>
        <end position="174"/>
    </location>
</feature>
<feature type="strand" evidence="5">
    <location>
        <begin position="177"/>
        <end position="179"/>
    </location>
</feature>
<feature type="strand" evidence="5">
    <location>
        <begin position="182"/>
        <end position="188"/>
    </location>
</feature>
<feature type="strand" evidence="5">
    <location>
        <begin position="191"/>
        <end position="195"/>
    </location>
</feature>
<feature type="turn" evidence="5">
    <location>
        <begin position="197"/>
        <end position="199"/>
    </location>
</feature>
<feature type="helix" evidence="5">
    <location>
        <begin position="201"/>
        <end position="204"/>
    </location>
</feature>
<feature type="strand" evidence="5">
    <location>
        <begin position="207"/>
        <end position="209"/>
    </location>
</feature>
<feature type="strand" evidence="5">
    <location>
        <begin position="219"/>
        <end position="225"/>
    </location>
</feature>
<feature type="strand" evidence="5">
    <location>
        <begin position="227"/>
        <end position="234"/>
    </location>
</feature>
<feature type="strand" evidence="5">
    <location>
        <begin position="237"/>
        <end position="243"/>
    </location>
</feature>
<feature type="strand" evidence="5">
    <location>
        <begin position="251"/>
        <end position="259"/>
    </location>
</feature>
<feature type="strand" evidence="5">
    <location>
        <begin position="263"/>
        <end position="267"/>
    </location>
</feature>
<feature type="strand" evidence="5">
    <location>
        <begin position="270"/>
        <end position="273"/>
    </location>
</feature>
<feature type="strand" evidence="5">
    <location>
        <begin position="283"/>
        <end position="296"/>
    </location>
</feature>
<keyword id="KW-0002">3D-structure</keyword>
<keyword id="KW-0903">Direct protein sequencing</keyword>
<keyword id="KW-1015">Disulfide bond</keyword>
<keyword id="KW-0326">Glycosidase</keyword>
<keyword id="KW-0378">Hydrolase</keyword>
<keyword id="KW-0574">Periplasm</keyword>
<keyword id="KW-0732">Signal</keyword>
<comment type="catalytic activity">
    <reaction>
        <text>Endohydrolysis of (1-&gt;4)-beta-D-linkages between D-galactose 4-sulfate and 3,6-anhydro-D-galactose in kappa-carrageenans.</text>
        <dbReference type="EC" id="3.2.1.83"/>
    </reaction>
</comment>
<comment type="subcellular location">
    <subcellularLocation>
        <location>Periplasm</location>
    </subcellularLocation>
</comment>
<comment type="similarity">
    <text evidence="4">Belongs to the glycosyl hydrolase 16 family.</text>
</comment>